<feature type="chain" id="PRO_0000157048" description="Thiamine-phosphate synthase">
    <location>
        <begin position="1"/>
        <end position="212"/>
    </location>
</feature>
<feature type="binding site" evidence="1">
    <location>
        <begin position="40"/>
        <end position="44"/>
    </location>
    <ligand>
        <name>4-amino-2-methyl-5-(diphosphooxymethyl)pyrimidine</name>
        <dbReference type="ChEBI" id="CHEBI:57841"/>
    </ligand>
</feature>
<feature type="binding site" evidence="1">
    <location>
        <position position="75"/>
    </location>
    <ligand>
        <name>4-amino-2-methyl-5-(diphosphooxymethyl)pyrimidine</name>
        <dbReference type="ChEBI" id="CHEBI:57841"/>
    </ligand>
</feature>
<feature type="binding site" evidence="1">
    <location>
        <position position="76"/>
    </location>
    <ligand>
        <name>Mg(2+)</name>
        <dbReference type="ChEBI" id="CHEBI:18420"/>
    </ligand>
</feature>
<feature type="binding site" evidence="1">
    <location>
        <position position="95"/>
    </location>
    <ligand>
        <name>Mg(2+)</name>
        <dbReference type="ChEBI" id="CHEBI:18420"/>
    </ligand>
</feature>
<feature type="binding site" evidence="1">
    <location>
        <position position="113"/>
    </location>
    <ligand>
        <name>4-amino-2-methyl-5-(diphosphooxymethyl)pyrimidine</name>
        <dbReference type="ChEBI" id="CHEBI:57841"/>
    </ligand>
</feature>
<feature type="binding site" evidence="1">
    <location>
        <begin position="139"/>
        <end position="141"/>
    </location>
    <ligand>
        <name>2-[(2R,5Z)-2-carboxy-4-methylthiazol-5(2H)-ylidene]ethyl phosphate</name>
        <dbReference type="ChEBI" id="CHEBI:62899"/>
    </ligand>
</feature>
<feature type="binding site" evidence="1">
    <location>
        <position position="142"/>
    </location>
    <ligand>
        <name>4-amino-2-methyl-5-(diphosphooxymethyl)pyrimidine</name>
        <dbReference type="ChEBI" id="CHEBI:57841"/>
    </ligand>
</feature>
<feature type="binding site" evidence="1">
    <location>
        <position position="171"/>
    </location>
    <ligand>
        <name>2-[(2R,5Z)-2-carboxy-4-methylthiazol-5(2H)-ylidene]ethyl phosphate</name>
        <dbReference type="ChEBI" id="CHEBI:62899"/>
    </ligand>
</feature>
<feature type="binding site" evidence="1">
    <location>
        <begin position="191"/>
        <end position="192"/>
    </location>
    <ligand>
        <name>2-[(2R,5Z)-2-carboxy-4-methylthiazol-5(2H)-ylidene]ethyl phosphate</name>
        <dbReference type="ChEBI" id="CHEBI:62899"/>
    </ligand>
</feature>
<gene>
    <name evidence="1" type="primary">thiE</name>
    <name type="ordered locus">SE_1690</name>
</gene>
<keyword id="KW-0460">Magnesium</keyword>
<keyword id="KW-0479">Metal-binding</keyword>
<keyword id="KW-0784">Thiamine biosynthesis</keyword>
<keyword id="KW-0808">Transferase</keyword>
<comment type="function">
    <text evidence="1">Condenses 4-methyl-5-(beta-hydroxyethyl)thiazole monophosphate (THZ-P) and 2-methyl-4-amino-5-hydroxymethyl pyrimidine pyrophosphate (HMP-PP) to form thiamine monophosphate (TMP).</text>
</comment>
<comment type="catalytic activity">
    <reaction evidence="1">
        <text>2-[(2R,5Z)-2-carboxy-4-methylthiazol-5(2H)-ylidene]ethyl phosphate + 4-amino-2-methyl-5-(diphosphooxymethyl)pyrimidine + 2 H(+) = thiamine phosphate + CO2 + diphosphate</text>
        <dbReference type="Rhea" id="RHEA:47844"/>
        <dbReference type="ChEBI" id="CHEBI:15378"/>
        <dbReference type="ChEBI" id="CHEBI:16526"/>
        <dbReference type="ChEBI" id="CHEBI:33019"/>
        <dbReference type="ChEBI" id="CHEBI:37575"/>
        <dbReference type="ChEBI" id="CHEBI:57841"/>
        <dbReference type="ChEBI" id="CHEBI:62899"/>
        <dbReference type="EC" id="2.5.1.3"/>
    </reaction>
</comment>
<comment type="catalytic activity">
    <reaction evidence="1">
        <text>2-(2-carboxy-4-methylthiazol-5-yl)ethyl phosphate + 4-amino-2-methyl-5-(diphosphooxymethyl)pyrimidine + 2 H(+) = thiamine phosphate + CO2 + diphosphate</text>
        <dbReference type="Rhea" id="RHEA:47848"/>
        <dbReference type="ChEBI" id="CHEBI:15378"/>
        <dbReference type="ChEBI" id="CHEBI:16526"/>
        <dbReference type="ChEBI" id="CHEBI:33019"/>
        <dbReference type="ChEBI" id="CHEBI:37575"/>
        <dbReference type="ChEBI" id="CHEBI:57841"/>
        <dbReference type="ChEBI" id="CHEBI:62890"/>
        <dbReference type="EC" id="2.5.1.3"/>
    </reaction>
</comment>
<comment type="catalytic activity">
    <reaction evidence="1">
        <text>4-methyl-5-(2-phosphooxyethyl)-thiazole + 4-amino-2-methyl-5-(diphosphooxymethyl)pyrimidine + H(+) = thiamine phosphate + diphosphate</text>
        <dbReference type="Rhea" id="RHEA:22328"/>
        <dbReference type="ChEBI" id="CHEBI:15378"/>
        <dbReference type="ChEBI" id="CHEBI:33019"/>
        <dbReference type="ChEBI" id="CHEBI:37575"/>
        <dbReference type="ChEBI" id="CHEBI:57841"/>
        <dbReference type="ChEBI" id="CHEBI:58296"/>
        <dbReference type="EC" id="2.5.1.3"/>
    </reaction>
</comment>
<comment type="cofactor">
    <cofactor evidence="1">
        <name>Mg(2+)</name>
        <dbReference type="ChEBI" id="CHEBI:18420"/>
    </cofactor>
    <text evidence="1">Binds 1 Mg(2+) ion per subunit.</text>
</comment>
<comment type="pathway">
    <text evidence="1">Cofactor biosynthesis; thiamine diphosphate biosynthesis; thiamine phosphate from 4-amino-2-methyl-5-diphosphomethylpyrimidine and 4-methyl-5-(2-phosphoethyl)-thiazole: step 1/1.</text>
</comment>
<comment type="similarity">
    <text evidence="1">Belongs to the thiamine-phosphate synthase family.</text>
</comment>
<proteinExistence type="inferred from homology"/>
<reference key="1">
    <citation type="journal article" date="2003" name="Mol. Microbiol.">
        <title>Genome-based analysis of virulence genes in a non-biofilm-forming Staphylococcus epidermidis strain (ATCC 12228).</title>
        <authorList>
            <person name="Zhang Y.-Q."/>
            <person name="Ren S.-X."/>
            <person name="Li H.-L."/>
            <person name="Wang Y.-X."/>
            <person name="Fu G."/>
            <person name="Yang J."/>
            <person name="Qin Z.-Q."/>
            <person name="Miao Y.-G."/>
            <person name="Wang W.-Y."/>
            <person name="Chen R.-S."/>
            <person name="Shen Y."/>
            <person name="Chen Z."/>
            <person name="Yuan Z.-H."/>
            <person name="Zhao G.-P."/>
            <person name="Qu D."/>
            <person name="Danchin A."/>
            <person name="Wen Y.-M."/>
        </authorList>
    </citation>
    <scope>NUCLEOTIDE SEQUENCE [LARGE SCALE GENOMIC DNA]</scope>
    <source>
        <strain>ATCC 12228 / FDA PCI 1200</strain>
    </source>
</reference>
<evidence type="ECO:0000255" key="1">
    <source>
        <dbReference type="HAMAP-Rule" id="MF_00097"/>
    </source>
</evidence>
<protein>
    <recommendedName>
        <fullName evidence="1">Thiamine-phosphate synthase</fullName>
        <shortName evidence="1">TP synthase</shortName>
        <shortName evidence="1">TPS</shortName>
        <ecNumber evidence="1">2.5.1.3</ecNumber>
    </recommendedName>
    <alternativeName>
        <fullName evidence="1">Thiamine-phosphate pyrophosphorylase</fullName>
        <shortName evidence="1">TMP pyrophosphorylase</shortName>
        <shortName evidence="1">TMP-PPase</shortName>
    </alternativeName>
</protein>
<dbReference type="EC" id="2.5.1.3" evidence="1"/>
<dbReference type="EMBL" id="AE015929">
    <property type="protein sequence ID" value="AAO05289.1"/>
    <property type="molecule type" value="Genomic_DNA"/>
</dbReference>
<dbReference type="RefSeq" id="NP_765245.1">
    <property type="nucleotide sequence ID" value="NC_004461.1"/>
</dbReference>
<dbReference type="RefSeq" id="WP_002505076.1">
    <property type="nucleotide sequence ID" value="NZ_WBME01000021.1"/>
</dbReference>
<dbReference type="SMR" id="Q8CNK2"/>
<dbReference type="GeneID" id="50018210"/>
<dbReference type="KEGG" id="sep:SE_1690"/>
<dbReference type="PATRIC" id="fig|176280.10.peg.1650"/>
<dbReference type="eggNOG" id="COG0352">
    <property type="taxonomic scope" value="Bacteria"/>
</dbReference>
<dbReference type="HOGENOM" id="CLU_018272_3_2_9"/>
<dbReference type="OrthoDB" id="9812206at2"/>
<dbReference type="UniPathway" id="UPA00060">
    <property type="reaction ID" value="UER00141"/>
</dbReference>
<dbReference type="Proteomes" id="UP000001411">
    <property type="component" value="Chromosome"/>
</dbReference>
<dbReference type="GO" id="GO:0005737">
    <property type="term" value="C:cytoplasm"/>
    <property type="evidence" value="ECO:0007669"/>
    <property type="project" value="TreeGrafter"/>
</dbReference>
<dbReference type="GO" id="GO:0000287">
    <property type="term" value="F:magnesium ion binding"/>
    <property type="evidence" value="ECO:0007669"/>
    <property type="project" value="UniProtKB-UniRule"/>
</dbReference>
<dbReference type="GO" id="GO:0004789">
    <property type="term" value="F:thiamine-phosphate diphosphorylase activity"/>
    <property type="evidence" value="ECO:0007669"/>
    <property type="project" value="UniProtKB-UniRule"/>
</dbReference>
<dbReference type="GO" id="GO:0009228">
    <property type="term" value="P:thiamine biosynthetic process"/>
    <property type="evidence" value="ECO:0007669"/>
    <property type="project" value="UniProtKB-KW"/>
</dbReference>
<dbReference type="GO" id="GO:0009229">
    <property type="term" value="P:thiamine diphosphate biosynthetic process"/>
    <property type="evidence" value="ECO:0007669"/>
    <property type="project" value="UniProtKB-UniRule"/>
</dbReference>
<dbReference type="CDD" id="cd00564">
    <property type="entry name" value="TMP_TenI"/>
    <property type="match status" value="1"/>
</dbReference>
<dbReference type="FunFam" id="3.20.20.70:FF:000096">
    <property type="entry name" value="Thiamine-phosphate synthase"/>
    <property type="match status" value="1"/>
</dbReference>
<dbReference type="Gene3D" id="3.20.20.70">
    <property type="entry name" value="Aldolase class I"/>
    <property type="match status" value="1"/>
</dbReference>
<dbReference type="HAMAP" id="MF_00097">
    <property type="entry name" value="TMP_synthase"/>
    <property type="match status" value="1"/>
</dbReference>
<dbReference type="InterPro" id="IPR013785">
    <property type="entry name" value="Aldolase_TIM"/>
</dbReference>
<dbReference type="InterPro" id="IPR036206">
    <property type="entry name" value="ThiamineP_synth_sf"/>
</dbReference>
<dbReference type="InterPro" id="IPR022998">
    <property type="entry name" value="ThiamineP_synth_TenI"/>
</dbReference>
<dbReference type="InterPro" id="IPR034291">
    <property type="entry name" value="TMP_synthase"/>
</dbReference>
<dbReference type="NCBIfam" id="TIGR00693">
    <property type="entry name" value="thiE"/>
    <property type="match status" value="1"/>
</dbReference>
<dbReference type="PANTHER" id="PTHR20857">
    <property type="entry name" value="THIAMINE-PHOSPHATE PYROPHOSPHORYLASE"/>
    <property type="match status" value="1"/>
</dbReference>
<dbReference type="PANTHER" id="PTHR20857:SF15">
    <property type="entry name" value="THIAMINE-PHOSPHATE SYNTHASE"/>
    <property type="match status" value="1"/>
</dbReference>
<dbReference type="Pfam" id="PF02581">
    <property type="entry name" value="TMP-TENI"/>
    <property type="match status" value="1"/>
</dbReference>
<dbReference type="SUPFAM" id="SSF51391">
    <property type="entry name" value="Thiamin phosphate synthase"/>
    <property type="match status" value="1"/>
</dbReference>
<accession>Q8CNK2</accession>
<name>THIE_STAES</name>
<organism>
    <name type="scientific">Staphylococcus epidermidis (strain ATCC 12228 / FDA PCI 1200)</name>
    <dbReference type="NCBI Taxonomy" id="176280"/>
    <lineage>
        <taxon>Bacteria</taxon>
        <taxon>Bacillati</taxon>
        <taxon>Bacillota</taxon>
        <taxon>Bacilli</taxon>
        <taxon>Bacillales</taxon>
        <taxon>Staphylococcaceae</taxon>
        <taxon>Staphylococcus</taxon>
    </lineage>
</organism>
<sequence>MFDSKQLSVYFICGTQDIPKNKSIEQVLKEALEAGITLYQFREKGPNALKGEKKKQLALKLKQLCHSYHVPMIVNDDVQLAQEINADGIHVGQDDMEIQQFASQFKNKIIGLSVGNLKEYQQSDLSKVDYIGVGPMYTTSSKDDASKPVGPSMISQLRLYIHDFPIVAIGGINETNVQPIVDEGADGISVISAITRSTNIDKTVKYFLRYFT</sequence>